<evidence type="ECO:0000250" key="1">
    <source>
        <dbReference type="UniProtKB" id="O04925"/>
    </source>
</evidence>
<evidence type="ECO:0000255" key="2"/>
<evidence type="ECO:0000255" key="3">
    <source>
        <dbReference type="RuleBase" id="RU000540"/>
    </source>
</evidence>
<evidence type="ECO:0000256" key="4">
    <source>
        <dbReference type="SAM" id="MobiDB-lite"/>
    </source>
</evidence>
<evidence type="ECO:0000269" key="5">
    <source>
    </source>
</evidence>
<evidence type="ECO:0000303" key="6">
    <source>
    </source>
</evidence>
<evidence type="ECO:0000305" key="7"/>
<evidence type="ECO:0000312" key="8">
    <source>
        <dbReference type="EMBL" id="QEM21451.1"/>
    </source>
</evidence>
<accession>C0HM28</accession>
<reference evidence="8" key="1">
    <citation type="journal article" date="2021" name="Pediatr. Allergy Immunol.">
        <title>Oleosin Cor a 15 is a novel allergen for Italian hazelnut allergic children.</title>
        <authorList>
            <person name="Nebbia S."/>
            <person name="Lamberti C."/>
            <person name="Cirrincione S."/>
            <person name="Acquadro A."/>
            <person name="Abba S."/>
            <person name="Ciuffo M."/>
            <person name="Torello Marinoni D."/>
            <person name="Manfredi M."/>
            <person name="Marengo E."/>
            <person name="Calzedda R."/>
            <person name="Monti G."/>
            <person name="Cavallarin L."/>
            <person name="Giuffrida M.G."/>
        </authorList>
    </citation>
    <scope>NUCLEOTIDE SEQUENCE [MRNA]</scope>
    <scope>PROTEIN SEQUENCE OF 2-12</scope>
    <scope>FUNCTION</scope>
    <scope>TISSUE SPECIFICITY</scope>
    <scope>MASS SPECTROMETRY</scope>
    <scope>ALLERGEN</scope>
</reference>
<organism evidence="8">
    <name type="scientific">Corylus avellana</name>
    <name type="common">European hazel</name>
    <name type="synonym">Corylus maxima</name>
    <dbReference type="NCBI Taxonomy" id="13451"/>
    <lineage>
        <taxon>Eukaryota</taxon>
        <taxon>Viridiplantae</taxon>
        <taxon>Streptophyta</taxon>
        <taxon>Embryophyta</taxon>
        <taxon>Tracheophyta</taxon>
        <taxon>Spermatophyta</taxon>
        <taxon>Magnoliopsida</taxon>
        <taxon>eudicotyledons</taxon>
        <taxon>Gunneridae</taxon>
        <taxon>Pentapetalae</taxon>
        <taxon>rosids</taxon>
        <taxon>fabids</taxon>
        <taxon>Fagales</taxon>
        <taxon>Betulaceae</taxon>
        <taxon>Corylus</taxon>
    </lineage>
</organism>
<dbReference type="EMBL" id="MK737923">
    <property type="protein sequence ID" value="QEM21451.1"/>
    <property type="molecule type" value="mRNA"/>
</dbReference>
<dbReference type="GO" id="GO:0016020">
    <property type="term" value="C:membrane"/>
    <property type="evidence" value="ECO:0007669"/>
    <property type="project" value="UniProtKB-SubCell"/>
</dbReference>
<dbReference type="GO" id="GO:0012511">
    <property type="term" value="C:monolayer-surrounded lipid storage body"/>
    <property type="evidence" value="ECO:0007669"/>
    <property type="project" value="InterPro"/>
</dbReference>
<dbReference type="GO" id="GO:0019915">
    <property type="term" value="P:lipid storage"/>
    <property type="evidence" value="ECO:0007669"/>
    <property type="project" value="TreeGrafter"/>
</dbReference>
<dbReference type="GO" id="GO:0050826">
    <property type="term" value="P:response to freezing"/>
    <property type="evidence" value="ECO:0007669"/>
    <property type="project" value="TreeGrafter"/>
</dbReference>
<dbReference type="GO" id="GO:0010344">
    <property type="term" value="P:seed oilbody biogenesis"/>
    <property type="evidence" value="ECO:0007669"/>
    <property type="project" value="TreeGrafter"/>
</dbReference>
<dbReference type="InterPro" id="IPR000136">
    <property type="entry name" value="Oleosin"/>
</dbReference>
<dbReference type="PANTHER" id="PTHR33203">
    <property type="entry name" value="OLEOSIN"/>
    <property type="match status" value="1"/>
</dbReference>
<dbReference type="PANTHER" id="PTHR33203:SF44">
    <property type="entry name" value="OLEOSIN 20.3 KDA"/>
    <property type="match status" value="1"/>
</dbReference>
<dbReference type="Pfam" id="PF01277">
    <property type="entry name" value="Oleosin"/>
    <property type="match status" value="1"/>
</dbReference>
<comment type="function">
    <text evidence="7">May have a structural role to stabilize the lipid body during desiccation of the seed by preventing coalescence of the oil. Probably interacts with both lipid and phospholipid moieties of lipid bodies. May also provide recognition signals for specific lipase anchorage in lipolysis during seedling growth.</text>
</comment>
<comment type="subcellular location">
    <subcellularLocation>
        <location evidence="1">Lipid droplet</location>
    </subcellularLocation>
    <subcellularLocation>
        <location evidence="2">Membrane</location>
        <topology evidence="2">Multi-pass membrane protein</topology>
    </subcellularLocation>
    <text evidence="7">Surface of oil bodies. Oleosins exist at a monolayer lipid/water interface.</text>
</comment>
<comment type="tissue specificity">
    <text evidence="5">Expressed in seeds (at protein level).</text>
</comment>
<comment type="domain">
    <text evidence="7">The proline-knot motif may be involved in the targeting to oil bodies.</text>
</comment>
<comment type="mass spectrometry" mass="17000.0" method="MALDI" evidence="5"/>
<comment type="allergen">
    <text evidence="5">Causes an allergic reaction in human (PubMed:34146442). Binds to IgE in 88% of the hazelnut-allergic patients tested (PubMed:34146442).</text>
</comment>
<comment type="similarity">
    <text evidence="3">Belongs to the oleosin family.</text>
</comment>
<feature type="initiator methionine" description="Removed" evidence="7">
    <location>
        <position position="1"/>
    </location>
</feature>
<feature type="chain" id="PRO_0000456215" description="Oleosin Cor a 15">
    <location>
        <begin position="2"/>
        <end position="169"/>
    </location>
</feature>
<feature type="transmembrane region" description="Helical" evidence="2">
    <location>
        <begin position="38"/>
        <end position="58"/>
    </location>
</feature>
<feature type="transmembrane region" description="Helical" evidence="2">
    <location>
        <begin position="70"/>
        <end position="90"/>
    </location>
</feature>
<feature type="region of interest" description="Disordered" evidence="4">
    <location>
        <begin position="122"/>
        <end position="169"/>
    </location>
</feature>
<feature type="short sequence motif" description="Proline-knot" evidence="1">
    <location>
        <begin position="70"/>
        <end position="81"/>
    </location>
</feature>
<feature type="compositionally biased region" description="Basic and acidic residues" evidence="4">
    <location>
        <begin position="122"/>
        <end position="131"/>
    </location>
</feature>
<feature type="compositionally biased region" description="Basic and acidic residues" evidence="4">
    <location>
        <begin position="160"/>
        <end position="169"/>
    </location>
</feature>
<proteinExistence type="evidence at protein level"/>
<protein>
    <recommendedName>
        <fullName evidence="6">Oleosin Cor a 15</fullName>
    </recommendedName>
    <allergenName evidence="6">Cor a 15</allergenName>
</protein>
<sequence length="169" mass="17695">MADYQHQQQHQRPADAFKGMFPEKGQAQVQGPSASKVIAVVTLLPLGGFLLLLAGLTFAGTLIGLALSTPLFVLCSPVLVPAAIVIGLAVTGFLTSGAFGITGISSLSWILKYLRGTSVPEQMEHAKRRAQDTAGHLGQKARETGQTVTGKGQEAGKTLEGGRGEEKKT</sequence>
<name>OLE15_CORAV</name>
<keyword id="KW-0020">Allergen</keyword>
<keyword id="KW-0903">Direct protein sequencing</keyword>
<keyword id="KW-0551">Lipid droplet</keyword>
<keyword id="KW-0472">Membrane</keyword>
<keyword id="KW-0812">Transmembrane</keyword>
<keyword id="KW-1133">Transmembrane helix</keyword>